<proteinExistence type="inferred from homology"/>
<sequence>MTTQAPPSNLLPLNPEQLARLQAATTDFSPTQLAWVSGYFWGMLNQQPGAVVNAPATAVEIPAITLISASQTGNARRVAEALRDDLLAAKLNVNLVNAGDYKFKQIASEKLVVVVASTQGEGEPAEEAVALHKFLFSKKAPKLDGTAFAVFGLGDTSYEFFCQSGKDFDSKLAELGAERLLDRVDADVEYQAAAAEWRARIVDVLKARVPKDTPAQAANSASGAVNEVSTSPYTKEEPLVASLSVNQKITGRDSEKDVRHIEIDLGDSGLRYQPGDALGVWYQNDPALVKELVELLWLKGTEQVNVEGKTLPLSEALQWHFELTVNTANIVENYATLTRSETLLPLVGDKAKLQHYAATTPIVDMVRFSPAQLDAEALIGLLRPLTPRLYSIASSQAEVESEVHITVGAVRFDIEGRARAGGASSFLADRVEEEGEVRVFIEHNDNFRLPANPETPVIMIGPGTGIAPFRAFMQQRAAEEAPGKNWLFFGNPHFTEDFLYQVEWQRYVKEGVLSRIDLAWSRDQKQKIYVQDKLREQGAELWAWINNGAHLYVCGDANRMAKDVEQALLEVIAEFGGMDIETADEFLSELRVERRYQRDVY</sequence>
<comment type="function">
    <text evidence="1">Component of the sulfite reductase complex that catalyzes the 6-electron reduction of sulfite to sulfide. This is one of several activities required for the biosynthesis of L-cysteine from sulfate. The flavoprotein component catalyzes the electron flow from NADPH -&gt; FAD -&gt; FMN to the hemoprotein component.</text>
</comment>
<comment type="catalytic activity">
    <reaction evidence="1">
        <text>hydrogen sulfide + 3 NADP(+) + 3 H2O = sulfite + 3 NADPH + 4 H(+)</text>
        <dbReference type="Rhea" id="RHEA:13801"/>
        <dbReference type="ChEBI" id="CHEBI:15377"/>
        <dbReference type="ChEBI" id="CHEBI:15378"/>
        <dbReference type="ChEBI" id="CHEBI:17359"/>
        <dbReference type="ChEBI" id="CHEBI:29919"/>
        <dbReference type="ChEBI" id="CHEBI:57783"/>
        <dbReference type="ChEBI" id="CHEBI:58349"/>
        <dbReference type="EC" id="1.8.1.2"/>
    </reaction>
</comment>
<comment type="cofactor">
    <cofactor evidence="1">
        <name>FAD</name>
        <dbReference type="ChEBI" id="CHEBI:57692"/>
    </cofactor>
    <text evidence="1">Binds 1 FAD per subunit.</text>
</comment>
<comment type="cofactor">
    <cofactor evidence="1">
        <name>FMN</name>
        <dbReference type="ChEBI" id="CHEBI:58210"/>
    </cofactor>
    <text evidence="1">Binds 1 FMN per subunit.</text>
</comment>
<comment type="pathway">
    <text evidence="1">Sulfur metabolism; hydrogen sulfide biosynthesis; hydrogen sulfide from sulfite (NADPH route): step 1/1.</text>
</comment>
<comment type="subunit">
    <text evidence="1">Alpha(8)-beta(8). The alpha component is a flavoprotein, the beta component is a hemoprotein.</text>
</comment>
<comment type="similarity">
    <text evidence="1">Belongs to the NADPH-dependent sulphite reductase flavoprotein subunit CysJ family.</text>
</comment>
<comment type="similarity">
    <text evidence="1">In the N-terminal section; belongs to the flavodoxin family.</text>
</comment>
<comment type="similarity">
    <text evidence="1">In the C-terminal section; belongs to the flavoprotein pyridine nucleotide cytochrome reductase family.</text>
</comment>
<dbReference type="EC" id="1.8.1.2" evidence="1"/>
<dbReference type="EMBL" id="CP000653">
    <property type="protein sequence ID" value="ABP61891.1"/>
    <property type="molecule type" value="Genomic_DNA"/>
</dbReference>
<dbReference type="RefSeq" id="WP_015960220.1">
    <property type="nucleotide sequence ID" value="NC_009436.1"/>
</dbReference>
<dbReference type="SMR" id="A4WDW1"/>
<dbReference type="STRING" id="399742.Ent638_3227"/>
<dbReference type="KEGG" id="ent:Ent638_3227"/>
<dbReference type="eggNOG" id="COG0369">
    <property type="taxonomic scope" value="Bacteria"/>
</dbReference>
<dbReference type="HOGENOM" id="CLU_001570_17_7_6"/>
<dbReference type="OrthoDB" id="9816402at2"/>
<dbReference type="UniPathway" id="UPA00140">
    <property type="reaction ID" value="UER00207"/>
</dbReference>
<dbReference type="Proteomes" id="UP000000230">
    <property type="component" value="Chromosome"/>
</dbReference>
<dbReference type="GO" id="GO:0005829">
    <property type="term" value="C:cytosol"/>
    <property type="evidence" value="ECO:0007669"/>
    <property type="project" value="TreeGrafter"/>
</dbReference>
<dbReference type="GO" id="GO:0050660">
    <property type="term" value="F:flavin adenine dinucleotide binding"/>
    <property type="evidence" value="ECO:0007669"/>
    <property type="project" value="InterPro"/>
</dbReference>
<dbReference type="GO" id="GO:0010181">
    <property type="term" value="F:FMN binding"/>
    <property type="evidence" value="ECO:0007669"/>
    <property type="project" value="InterPro"/>
</dbReference>
<dbReference type="GO" id="GO:0004783">
    <property type="term" value="F:sulfite reductase (NADPH) activity"/>
    <property type="evidence" value="ECO:0007669"/>
    <property type="project" value="UniProtKB-UniRule"/>
</dbReference>
<dbReference type="GO" id="GO:0019344">
    <property type="term" value="P:cysteine biosynthetic process"/>
    <property type="evidence" value="ECO:0007669"/>
    <property type="project" value="UniProtKB-KW"/>
</dbReference>
<dbReference type="GO" id="GO:0070814">
    <property type="term" value="P:hydrogen sulfide biosynthetic process"/>
    <property type="evidence" value="ECO:0007669"/>
    <property type="project" value="UniProtKB-UniRule"/>
</dbReference>
<dbReference type="GO" id="GO:0000103">
    <property type="term" value="P:sulfate assimilation"/>
    <property type="evidence" value="ECO:0007669"/>
    <property type="project" value="UniProtKB-UniRule"/>
</dbReference>
<dbReference type="CDD" id="cd06199">
    <property type="entry name" value="SiR"/>
    <property type="match status" value="1"/>
</dbReference>
<dbReference type="FunFam" id="3.40.50.80:FF:000001">
    <property type="entry name" value="NADPH--cytochrome P450 reductase 1"/>
    <property type="match status" value="1"/>
</dbReference>
<dbReference type="FunFam" id="1.20.990.10:FF:000004">
    <property type="entry name" value="Sulfite reductase [NADPH] flavoprotein alpha-component"/>
    <property type="match status" value="1"/>
</dbReference>
<dbReference type="FunFam" id="3.40.50.360:FF:000018">
    <property type="entry name" value="Sulfite reductase [NADPH] flavoprotein alpha-component"/>
    <property type="match status" value="1"/>
</dbReference>
<dbReference type="Gene3D" id="3.40.50.360">
    <property type="match status" value="1"/>
</dbReference>
<dbReference type="Gene3D" id="1.20.990.10">
    <property type="entry name" value="NADPH-cytochrome p450 Reductase, Chain A, domain 3"/>
    <property type="match status" value="1"/>
</dbReference>
<dbReference type="Gene3D" id="3.40.50.80">
    <property type="entry name" value="Nucleotide-binding domain of ferredoxin-NADP reductase (FNR) module"/>
    <property type="match status" value="1"/>
</dbReference>
<dbReference type="Gene3D" id="2.40.30.10">
    <property type="entry name" value="Translation factors"/>
    <property type="match status" value="1"/>
</dbReference>
<dbReference type="HAMAP" id="MF_01541">
    <property type="entry name" value="CysJ"/>
    <property type="match status" value="1"/>
</dbReference>
<dbReference type="InterPro" id="IPR010199">
    <property type="entry name" value="CysJ"/>
</dbReference>
<dbReference type="InterPro" id="IPR003097">
    <property type="entry name" value="CysJ-like_FAD-binding"/>
</dbReference>
<dbReference type="InterPro" id="IPR029758">
    <property type="entry name" value="CysJ_Proteobact"/>
</dbReference>
<dbReference type="InterPro" id="IPR017927">
    <property type="entry name" value="FAD-bd_FR_type"/>
</dbReference>
<dbReference type="InterPro" id="IPR001094">
    <property type="entry name" value="Flavdoxin-like"/>
</dbReference>
<dbReference type="InterPro" id="IPR008254">
    <property type="entry name" value="Flavodoxin/NO_synth"/>
</dbReference>
<dbReference type="InterPro" id="IPR001709">
    <property type="entry name" value="Flavoprot_Pyr_Nucl_cyt_Rdtase"/>
</dbReference>
<dbReference type="InterPro" id="IPR029039">
    <property type="entry name" value="Flavoprotein-like_sf"/>
</dbReference>
<dbReference type="InterPro" id="IPR039261">
    <property type="entry name" value="FNR_nucleotide-bd"/>
</dbReference>
<dbReference type="InterPro" id="IPR023173">
    <property type="entry name" value="NADPH_Cyt_P450_Rdtase_alpha"/>
</dbReference>
<dbReference type="InterPro" id="IPR001433">
    <property type="entry name" value="OxRdtase_FAD/NAD-bd"/>
</dbReference>
<dbReference type="InterPro" id="IPR017938">
    <property type="entry name" value="Riboflavin_synthase-like_b-brl"/>
</dbReference>
<dbReference type="NCBIfam" id="TIGR01931">
    <property type="entry name" value="cysJ"/>
    <property type="match status" value="1"/>
</dbReference>
<dbReference type="NCBIfam" id="NF004859">
    <property type="entry name" value="PRK06214.1"/>
    <property type="match status" value="1"/>
</dbReference>
<dbReference type="NCBIfam" id="NF008197">
    <property type="entry name" value="PRK10953.1"/>
    <property type="match status" value="1"/>
</dbReference>
<dbReference type="PANTHER" id="PTHR19384:SF128">
    <property type="entry name" value="NADPH OXIDOREDUCTASE A"/>
    <property type="match status" value="1"/>
</dbReference>
<dbReference type="PANTHER" id="PTHR19384">
    <property type="entry name" value="NITRIC OXIDE SYNTHASE-RELATED"/>
    <property type="match status" value="1"/>
</dbReference>
<dbReference type="Pfam" id="PF00667">
    <property type="entry name" value="FAD_binding_1"/>
    <property type="match status" value="1"/>
</dbReference>
<dbReference type="Pfam" id="PF00258">
    <property type="entry name" value="Flavodoxin_1"/>
    <property type="match status" value="1"/>
</dbReference>
<dbReference type="Pfam" id="PF00175">
    <property type="entry name" value="NAD_binding_1"/>
    <property type="match status" value="1"/>
</dbReference>
<dbReference type="PIRSF" id="PIRSF000207">
    <property type="entry name" value="SiR-FP_CysJ"/>
    <property type="match status" value="1"/>
</dbReference>
<dbReference type="PRINTS" id="PR00369">
    <property type="entry name" value="FLAVODOXIN"/>
</dbReference>
<dbReference type="PRINTS" id="PR00371">
    <property type="entry name" value="FPNCR"/>
</dbReference>
<dbReference type="SUPFAM" id="SSF52343">
    <property type="entry name" value="Ferredoxin reductase-like, C-terminal NADP-linked domain"/>
    <property type="match status" value="1"/>
</dbReference>
<dbReference type="SUPFAM" id="SSF52218">
    <property type="entry name" value="Flavoproteins"/>
    <property type="match status" value="1"/>
</dbReference>
<dbReference type="SUPFAM" id="SSF63380">
    <property type="entry name" value="Riboflavin synthase domain-like"/>
    <property type="match status" value="1"/>
</dbReference>
<dbReference type="PROSITE" id="PS51384">
    <property type="entry name" value="FAD_FR"/>
    <property type="match status" value="1"/>
</dbReference>
<dbReference type="PROSITE" id="PS50902">
    <property type="entry name" value="FLAVODOXIN_LIKE"/>
    <property type="match status" value="1"/>
</dbReference>
<evidence type="ECO:0000255" key="1">
    <source>
        <dbReference type="HAMAP-Rule" id="MF_01541"/>
    </source>
</evidence>
<name>CYSJ_ENT38</name>
<reference key="1">
    <citation type="journal article" date="2010" name="PLoS Genet.">
        <title>Genome sequence of the plant growth promoting endophytic bacterium Enterobacter sp. 638.</title>
        <authorList>
            <person name="Taghavi S."/>
            <person name="van der Lelie D."/>
            <person name="Hoffman A."/>
            <person name="Zhang Y.B."/>
            <person name="Walla M.D."/>
            <person name="Vangronsveld J."/>
            <person name="Newman L."/>
            <person name="Monchy S."/>
        </authorList>
    </citation>
    <scope>NUCLEOTIDE SEQUENCE [LARGE SCALE GENOMIC DNA]</scope>
    <source>
        <strain>638</strain>
    </source>
</reference>
<feature type="chain" id="PRO_1000087635" description="Sulfite reductase [NADPH] flavoprotein alpha-component">
    <location>
        <begin position="1"/>
        <end position="601"/>
    </location>
</feature>
<feature type="domain" description="Flavodoxin-like" evidence="1">
    <location>
        <begin position="64"/>
        <end position="202"/>
    </location>
</feature>
<feature type="domain" description="FAD-binding FR-type" evidence="1">
    <location>
        <begin position="236"/>
        <end position="450"/>
    </location>
</feature>
<feature type="binding site" evidence="1">
    <location>
        <begin position="70"/>
        <end position="75"/>
    </location>
    <ligand>
        <name>FMN</name>
        <dbReference type="ChEBI" id="CHEBI:58210"/>
    </ligand>
</feature>
<feature type="binding site" evidence="1">
    <location>
        <begin position="117"/>
        <end position="120"/>
    </location>
    <ligand>
        <name>FMN</name>
        <dbReference type="ChEBI" id="CHEBI:58210"/>
    </ligand>
</feature>
<feature type="binding site" evidence="1">
    <location>
        <begin position="153"/>
        <end position="162"/>
    </location>
    <ligand>
        <name>FMN</name>
        <dbReference type="ChEBI" id="CHEBI:58210"/>
    </ligand>
</feature>
<feature type="binding site" evidence="1">
    <location>
        <position position="324"/>
    </location>
    <ligand>
        <name>FAD</name>
        <dbReference type="ChEBI" id="CHEBI:57692"/>
    </ligand>
</feature>
<feature type="binding site" evidence="1">
    <location>
        <position position="358"/>
    </location>
    <ligand>
        <name>FAD</name>
        <dbReference type="ChEBI" id="CHEBI:57692"/>
    </ligand>
</feature>
<feature type="binding site" evidence="1">
    <location>
        <begin position="388"/>
        <end position="391"/>
    </location>
    <ligand>
        <name>FAD</name>
        <dbReference type="ChEBI" id="CHEBI:57692"/>
    </ligand>
</feature>
<feature type="binding site" evidence="1">
    <location>
        <begin position="406"/>
        <end position="408"/>
    </location>
    <ligand>
        <name>FAD</name>
        <dbReference type="ChEBI" id="CHEBI:57692"/>
    </ligand>
</feature>
<feature type="binding site" evidence="1">
    <location>
        <begin position="421"/>
        <end position="424"/>
    </location>
    <ligand>
        <name>FAD</name>
        <dbReference type="ChEBI" id="CHEBI:57692"/>
    </ligand>
</feature>
<feature type="binding site" evidence="1">
    <location>
        <begin position="521"/>
        <end position="522"/>
    </location>
    <ligand>
        <name>NADP(+)</name>
        <dbReference type="ChEBI" id="CHEBI:58349"/>
    </ligand>
</feature>
<feature type="binding site" evidence="1">
    <location>
        <begin position="527"/>
        <end position="531"/>
    </location>
    <ligand>
        <name>NADP(+)</name>
        <dbReference type="ChEBI" id="CHEBI:58349"/>
    </ligand>
</feature>
<feature type="binding site" evidence="1">
    <location>
        <position position="563"/>
    </location>
    <ligand>
        <name>NADP(+)</name>
        <dbReference type="ChEBI" id="CHEBI:58349"/>
    </ligand>
</feature>
<feature type="binding site" evidence="1">
    <location>
        <position position="601"/>
    </location>
    <ligand>
        <name>FAD</name>
        <dbReference type="ChEBI" id="CHEBI:57692"/>
    </ligand>
</feature>
<keyword id="KW-0028">Amino-acid biosynthesis</keyword>
<keyword id="KW-0198">Cysteine biosynthesis</keyword>
<keyword id="KW-0249">Electron transport</keyword>
<keyword id="KW-0274">FAD</keyword>
<keyword id="KW-0285">Flavoprotein</keyword>
<keyword id="KW-0288">FMN</keyword>
<keyword id="KW-0521">NADP</keyword>
<keyword id="KW-0560">Oxidoreductase</keyword>
<keyword id="KW-0813">Transport</keyword>
<accession>A4WDW1</accession>
<organism>
    <name type="scientific">Enterobacter sp. (strain 638)</name>
    <dbReference type="NCBI Taxonomy" id="399742"/>
    <lineage>
        <taxon>Bacteria</taxon>
        <taxon>Pseudomonadati</taxon>
        <taxon>Pseudomonadota</taxon>
        <taxon>Gammaproteobacteria</taxon>
        <taxon>Enterobacterales</taxon>
        <taxon>Enterobacteriaceae</taxon>
        <taxon>Enterobacter</taxon>
    </lineage>
</organism>
<protein>
    <recommendedName>
        <fullName evidence="1">Sulfite reductase [NADPH] flavoprotein alpha-component</fullName>
        <shortName evidence="1">SiR-FP</shortName>
        <ecNumber evidence="1">1.8.1.2</ecNumber>
    </recommendedName>
</protein>
<gene>
    <name evidence="1" type="primary">cysJ</name>
    <name type="ordered locus">Ent638_3227</name>
</gene>